<comment type="function">
    <text evidence="1">Redox regulated molecular chaperone. Protects both thermally unfolding and oxidatively damaged proteins from irreversible aggregation. Plays an important role in the bacterial defense system toward oxidative stress.</text>
</comment>
<comment type="subcellular location">
    <subcellularLocation>
        <location evidence="1">Cytoplasm</location>
    </subcellularLocation>
</comment>
<comment type="PTM">
    <text evidence="1">Under oxidizing conditions two disulfide bonds are formed involving the reactive cysteines. Under reducing conditions zinc is bound to the reactive cysteines and the protein is inactive.</text>
</comment>
<comment type="similarity">
    <text evidence="1">Belongs to the HSP33 family.</text>
</comment>
<keyword id="KW-0143">Chaperone</keyword>
<keyword id="KW-0963">Cytoplasm</keyword>
<keyword id="KW-1015">Disulfide bond</keyword>
<keyword id="KW-0676">Redox-active center</keyword>
<keyword id="KW-1185">Reference proteome</keyword>
<keyword id="KW-0862">Zinc</keyword>
<gene>
    <name evidence="1" type="primary">hslO</name>
    <name type="ordered locus">LCA_1596</name>
</gene>
<sequence>MKDYLVKQVSEDGQLRAYAVNATQVVTEAQEKHDTWPTSSAAFGRTIVGTLLLSAAGLKGDTKMTVKVDGDGPVGKIVVDGNAQGTVKGYVTNPHVNLPSNEKNKIDVKAGVGTTGTLSVTKDLGLKEPFTGQVPLVSGELGEDFTYYLAKSEQTPSAVGVSVFVNEDSTIGVAGGFMIQILPGADDRLIDVLEARLQEMPLVSELLQQGMTPEGIITEIVGELPMKTLEELPVKYECDCSKERFAKALSSIAPQDLKQLIEEDHGAEATCRFCGKQYQFSEADLKAILAEQ</sequence>
<name>HSLO_LATSS</name>
<dbReference type="EMBL" id="CR936503">
    <property type="protein sequence ID" value="CAI55903.1"/>
    <property type="molecule type" value="Genomic_DNA"/>
</dbReference>
<dbReference type="RefSeq" id="WP_011375289.1">
    <property type="nucleotide sequence ID" value="NC_007576.1"/>
</dbReference>
<dbReference type="SMR" id="Q38V81"/>
<dbReference type="STRING" id="314315.LCA_1596"/>
<dbReference type="KEGG" id="lsa:LCA_1596"/>
<dbReference type="eggNOG" id="COG1281">
    <property type="taxonomic scope" value="Bacteria"/>
</dbReference>
<dbReference type="HOGENOM" id="CLU_054493_1_0_9"/>
<dbReference type="OrthoDB" id="9776534at2"/>
<dbReference type="Proteomes" id="UP000002707">
    <property type="component" value="Chromosome"/>
</dbReference>
<dbReference type="GO" id="GO:0005737">
    <property type="term" value="C:cytoplasm"/>
    <property type="evidence" value="ECO:0007669"/>
    <property type="project" value="UniProtKB-SubCell"/>
</dbReference>
<dbReference type="GO" id="GO:0044183">
    <property type="term" value="F:protein folding chaperone"/>
    <property type="evidence" value="ECO:0007669"/>
    <property type="project" value="TreeGrafter"/>
</dbReference>
<dbReference type="GO" id="GO:0051082">
    <property type="term" value="F:unfolded protein binding"/>
    <property type="evidence" value="ECO:0007669"/>
    <property type="project" value="UniProtKB-UniRule"/>
</dbReference>
<dbReference type="GO" id="GO:0042026">
    <property type="term" value="P:protein refolding"/>
    <property type="evidence" value="ECO:0007669"/>
    <property type="project" value="TreeGrafter"/>
</dbReference>
<dbReference type="CDD" id="cd00498">
    <property type="entry name" value="Hsp33"/>
    <property type="match status" value="1"/>
</dbReference>
<dbReference type="Gene3D" id="3.55.30.10">
    <property type="entry name" value="Hsp33 domain"/>
    <property type="match status" value="1"/>
</dbReference>
<dbReference type="Gene3D" id="3.90.1280.10">
    <property type="entry name" value="HSP33 redox switch-like"/>
    <property type="match status" value="1"/>
</dbReference>
<dbReference type="HAMAP" id="MF_00117">
    <property type="entry name" value="HslO"/>
    <property type="match status" value="1"/>
</dbReference>
<dbReference type="InterPro" id="IPR000397">
    <property type="entry name" value="Heat_shock_Hsp33"/>
</dbReference>
<dbReference type="InterPro" id="IPR016154">
    <property type="entry name" value="Heat_shock_Hsp33_C"/>
</dbReference>
<dbReference type="InterPro" id="IPR016153">
    <property type="entry name" value="Heat_shock_Hsp33_N"/>
</dbReference>
<dbReference type="NCBIfam" id="NF001033">
    <property type="entry name" value="PRK00114.1"/>
    <property type="match status" value="1"/>
</dbReference>
<dbReference type="PANTHER" id="PTHR30111">
    <property type="entry name" value="33 KDA CHAPERONIN"/>
    <property type="match status" value="1"/>
</dbReference>
<dbReference type="PANTHER" id="PTHR30111:SF1">
    <property type="entry name" value="33 KDA CHAPERONIN"/>
    <property type="match status" value="1"/>
</dbReference>
<dbReference type="Pfam" id="PF01430">
    <property type="entry name" value="HSP33"/>
    <property type="match status" value="1"/>
</dbReference>
<dbReference type="PIRSF" id="PIRSF005261">
    <property type="entry name" value="Heat_shock_Hsp33"/>
    <property type="match status" value="1"/>
</dbReference>
<dbReference type="SUPFAM" id="SSF64397">
    <property type="entry name" value="Hsp33 domain"/>
    <property type="match status" value="1"/>
</dbReference>
<dbReference type="SUPFAM" id="SSF118352">
    <property type="entry name" value="HSP33 redox switch-like"/>
    <property type="match status" value="1"/>
</dbReference>
<reference key="1">
    <citation type="journal article" date="2005" name="Nat. Biotechnol.">
        <title>The complete genome sequence of the meat-borne lactic acid bacterium Lactobacillus sakei 23K.</title>
        <authorList>
            <person name="Chaillou S."/>
            <person name="Champomier-Verges M.-C."/>
            <person name="Cornet M."/>
            <person name="Crutz-Le Coq A.-M."/>
            <person name="Dudez A.-M."/>
            <person name="Martin V."/>
            <person name="Beaufils S."/>
            <person name="Darbon-Rongere E."/>
            <person name="Bossy R."/>
            <person name="Loux V."/>
            <person name="Zagorec M."/>
        </authorList>
    </citation>
    <scope>NUCLEOTIDE SEQUENCE [LARGE SCALE GENOMIC DNA]</scope>
    <source>
        <strain>23K</strain>
    </source>
</reference>
<feature type="chain" id="PRO_0000238074" description="33 kDa chaperonin">
    <location>
        <begin position="1"/>
        <end position="292"/>
    </location>
</feature>
<feature type="disulfide bond" description="Redox-active" evidence="1">
    <location>
        <begin position="238"/>
        <end position="240"/>
    </location>
</feature>
<feature type="disulfide bond" description="Redox-active" evidence="1">
    <location>
        <begin position="271"/>
        <end position="274"/>
    </location>
</feature>
<accession>Q38V81</accession>
<evidence type="ECO:0000255" key="1">
    <source>
        <dbReference type="HAMAP-Rule" id="MF_00117"/>
    </source>
</evidence>
<organism>
    <name type="scientific">Latilactobacillus sakei subsp. sakei (strain 23K)</name>
    <name type="common">Lactobacillus sakei subsp. sakei</name>
    <dbReference type="NCBI Taxonomy" id="314315"/>
    <lineage>
        <taxon>Bacteria</taxon>
        <taxon>Bacillati</taxon>
        <taxon>Bacillota</taxon>
        <taxon>Bacilli</taxon>
        <taxon>Lactobacillales</taxon>
        <taxon>Lactobacillaceae</taxon>
        <taxon>Latilactobacillus</taxon>
    </lineage>
</organism>
<proteinExistence type="inferred from homology"/>
<protein>
    <recommendedName>
        <fullName evidence="1">33 kDa chaperonin</fullName>
    </recommendedName>
    <alternativeName>
        <fullName evidence="1">Heat shock protein 33 homolog</fullName>
        <shortName evidence="1">HSP33</shortName>
    </alternativeName>
</protein>